<name>SDC2B_XENLA</name>
<feature type="signal peptide" evidence="2">
    <location>
        <begin position="1"/>
        <end position="22"/>
    </location>
</feature>
<feature type="chain" id="PRO_0000259658" description="Syndecan-2-B">
    <location>
        <begin position="23"/>
        <end position="190"/>
    </location>
</feature>
<feature type="topological domain" description="Extracellular" evidence="2">
    <location>
        <begin position="23"/>
        <end position="136"/>
    </location>
</feature>
<feature type="transmembrane region" description="Helical" evidence="2">
    <location>
        <begin position="137"/>
        <end position="157"/>
    </location>
</feature>
<feature type="topological domain" description="Cytoplasmic" evidence="2">
    <location>
        <begin position="158"/>
        <end position="190"/>
    </location>
</feature>
<feature type="region of interest" description="Disordered" evidence="3">
    <location>
        <begin position="34"/>
        <end position="60"/>
    </location>
</feature>
<feature type="region of interest" description="Disordered" evidence="3">
    <location>
        <begin position="167"/>
        <end position="190"/>
    </location>
</feature>
<feature type="glycosylation site" description="O-linked (Xyl...) (glycosaminoglycan) serine" evidence="2">
    <location>
        <position position="36"/>
    </location>
</feature>
<feature type="glycosylation site" description="O-linked (Xyl...) (glycosaminoglycan) serine" evidence="2">
    <location>
        <position position="48"/>
    </location>
</feature>
<feature type="glycosylation site" description="O-linked (Xyl...) (glycosaminoglycan) serine" evidence="2">
    <location>
        <position position="50"/>
    </location>
</feature>
<feature type="glycosylation site" description="O-linked (Xyl...) (glycosaminoglycan) serine" evidence="2">
    <location>
        <position position="52"/>
    </location>
</feature>
<accession>Q6GR51</accession>
<comment type="function">
    <text>Cell surface proteoglycan.</text>
</comment>
<comment type="subcellular location">
    <subcellularLocation>
        <location>Membrane</location>
        <topology>Single-pass type I membrane protein</topology>
    </subcellularLocation>
</comment>
<comment type="PTM">
    <text evidence="1">O-glycosylated; contains both heparan sulfate and chondroitin sulfate.</text>
</comment>
<comment type="similarity">
    <text evidence="4">Belongs to the syndecan proteoglycan family.</text>
</comment>
<reference key="1">
    <citation type="journal article" date="1996" name="Mech. Dev.">
        <title>Embryonic expression patterns of Xenopus syndecans.</title>
        <authorList>
            <person name="Teel A.L."/>
            <person name="Yost H.J."/>
        </authorList>
    </citation>
    <scope>NUCLEOTIDE SEQUENCE [MRNA]</scope>
</reference>
<reference key="2">
    <citation type="submission" date="2004-05" db="EMBL/GenBank/DDBJ databases">
        <authorList>
            <consortium name="NIH - Xenopus Gene Collection (XGC) project"/>
        </authorList>
    </citation>
    <scope>NUCLEOTIDE SEQUENCE [LARGE SCALE MRNA]</scope>
    <source>
        <tissue>Spleen</tissue>
    </source>
</reference>
<evidence type="ECO:0000250" key="1">
    <source>
        <dbReference type="UniProtKB" id="P43407"/>
    </source>
</evidence>
<evidence type="ECO:0000255" key="2"/>
<evidence type="ECO:0000256" key="3">
    <source>
        <dbReference type="SAM" id="MobiDB-lite"/>
    </source>
</evidence>
<evidence type="ECO:0000305" key="4"/>
<organism>
    <name type="scientific">Xenopus laevis</name>
    <name type="common">African clawed frog</name>
    <dbReference type="NCBI Taxonomy" id="8355"/>
    <lineage>
        <taxon>Eukaryota</taxon>
        <taxon>Metazoa</taxon>
        <taxon>Chordata</taxon>
        <taxon>Craniata</taxon>
        <taxon>Vertebrata</taxon>
        <taxon>Euteleostomi</taxon>
        <taxon>Amphibia</taxon>
        <taxon>Batrachia</taxon>
        <taxon>Anura</taxon>
        <taxon>Pipoidea</taxon>
        <taxon>Pipidae</taxon>
        <taxon>Xenopodinae</taxon>
        <taxon>Xenopus</taxon>
        <taxon>Xenopus</taxon>
    </lineage>
</organism>
<sequence>MRNVWLIVPFALLAAFSGETWAQADRDLYIDSTESSGNYPVDDDDYSSGSGSGIPAHDDDEDNVVLTTVQTLISSPSSEMPYVDTTTLKTQTKMAPETKEPGEVESTNTVLVHENKNIIQTATHTENLFHRTEVLAAVIAGGGIGFLFAVFLILLLVYRMRKKDEGSYDLGERKPSSAVYQKAPTKEFYA</sequence>
<proteinExistence type="evidence at transcript level"/>
<keyword id="KW-0325">Glycoprotein</keyword>
<keyword id="KW-0357">Heparan sulfate</keyword>
<keyword id="KW-0472">Membrane</keyword>
<keyword id="KW-0654">Proteoglycan</keyword>
<keyword id="KW-1185">Reference proteome</keyword>
<keyword id="KW-0732">Signal</keyword>
<keyword id="KW-0812">Transmembrane</keyword>
<keyword id="KW-1133">Transmembrane helix</keyword>
<dbReference type="EMBL" id="U41760">
    <property type="protein sequence ID" value="AAB81325.1"/>
    <property type="molecule type" value="mRNA"/>
</dbReference>
<dbReference type="EMBL" id="BC071080">
    <property type="protein sequence ID" value="AAH71080.1"/>
    <property type="molecule type" value="mRNA"/>
</dbReference>
<dbReference type="RefSeq" id="NP_001080940.1">
    <property type="nucleotide sequence ID" value="NM_001087471.1"/>
</dbReference>
<dbReference type="SMR" id="Q6GR51"/>
<dbReference type="GlyCosmos" id="Q6GR51">
    <property type="glycosylation" value="4 sites, No reported glycans"/>
</dbReference>
<dbReference type="DNASU" id="394283"/>
<dbReference type="GeneID" id="394283"/>
<dbReference type="KEGG" id="xla:394283"/>
<dbReference type="AGR" id="Xenbase:XB-GENE-6254666"/>
<dbReference type="CTD" id="394283"/>
<dbReference type="Xenbase" id="XB-GENE-6254666">
    <property type="gene designation" value="sdc2.S"/>
</dbReference>
<dbReference type="OMA" id="YVSGESR"/>
<dbReference type="OrthoDB" id="10044468at2759"/>
<dbReference type="Proteomes" id="UP000186698">
    <property type="component" value="Chromosome 6S"/>
</dbReference>
<dbReference type="Bgee" id="394283">
    <property type="expression patterns" value="Expressed in internal ear and 19 other cell types or tissues"/>
</dbReference>
<dbReference type="GO" id="GO:0009986">
    <property type="term" value="C:cell surface"/>
    <property type="evidence" value="ECO:0000318"/>
    <property type="project" value="GO_Central"/>
</dbReference>
<dbReference type="GO" id="GO:0016020">
    <property type="term" value="C:membrane"/>
    <property type="evidence" value="ECO:0007669"/>
    <property type="project" value="UniProtKB-SubCell"/>
</dbReference>
<dbReference type="GO" id="GO:0016477">
    <property type="term" value="P:cell migration"/>
    <property type="evidence" value="ECO:0000318"/>
    <property type="project" value="GO_Central"/>
</dbReference>
<dbReference type="InterPro" id="IPR003585">
    <property type="entry name" value="Neurexin-like"/>
</dbReference>
<dbReference type="InterPro" id="IPR001050">
    <property type="entry name" value="Syndecan"/>
</dbReference>
<dbReference type="InterPro" id="IPR027789">
    <property type="entry name" value="Syndecan/Neurexin_dom"/>
</dbReference>
<dbReference type="InterPro" id="IPR030479">
    <property type="entry name" value="Syndecan_CS"/>
</dbReference>
<dbReference type="PANTHER" id="PTHR10915">
    <property type="entry name" value="SYNDECAN"/>
    <property type="match status" value="1"/>
</dbReference>
<dbReference type="PANTHER" id="PTHR10915:SF6">
    <property type="entry name" value="SYNDECAN-2"/>
    <property type="match status" value="1"/>
</dbReference>
<dbReference type="Pfam" id="PF01034">
    <property type="entry name" value="Syndecan"/>
    <property type="match status" value="1"/>
</dbReference>
<dbReference type="SMART" id="SM00294">
    <property type="entry name" value="4.1m"/>
    <property type="match status" value="1"/>
</dbReference>
<dbReference type="PROSITE" id="PS00964">
    <property type="entry name" value="SYNDECAN"/>
    <property type="match status" value="1"/>
</dbReference>
<protein>
    <recommendedName>
        <fullName>Syndecan-2-B</fullName>
        <shortName>SYND2-B</shortName>
    </recommendedName>
    <alternativeName>
        <fullName>Xsyn-2</fullName>
    </alternativeName>
</protein>
<gene>
    <name type="primary">sdc2-b</name>
</gene>